<gene>
    <name type="primary">yydC</name>
    <name type="ordered locus">BSU40210</name>
</gene>
<organism>
    <name type="scientific">Bacillus subtilis (strain 168)</name>
    <dbReference type="NCBI Taxonomy" id="224308"/>
    <lineage>
        <taxon>Bacteria</taxon>
        <taxon>Bacillati</taxon>
        <taxon>Bacillota</taxon>
        <taxon>Bacilli</taxon>
        <taxon>Bacillales</taxon>
        <taxon>Bacillaceae</taxon>
        <taxon>Bacillus</taxon>
    </lineage>
</organism>
<feature type="chain" id="PRO_0000050076" description="Uncharacterized protein YydC">
    <location>
        <begin position="1"/>
        <end position="132"/>
    </location>
</feature>
<proteinExistence type="predicted"/>
<sequence>MIDLKIETAENILKYSYVLLENEFKNIQIGNDLIPLVNNSPLKKEKAERPEMNHFLLTKYNAVEENILYSSKILYELLEKEKHIDQLFLDYAKSQGIIINLNIERILYLSLTFLYSLGKVSFNQNMISRTES</sequence>
<dbReference type="EMBL" id="D78193">
    <property type="protein sequence ID" value="BAA11279.1"/>
    <property type="molecule type" value="Genomic_DNA"/>
</dbReference>
<dbReference type="EMBL" id="AL009126">
    <property type="protein sequence ID" value="CAB16058.1"/>
    <property type="molecule type" value="Genomic_DNA"/>
</dbReference>
<dbReference type="PIR" id="B70091">
    <property type="entry name" value="B70091"/>
</dbReference>
<dbReference type="RefSeq" id="NP_391901.1">
    <property type="nucleotide sequence ID" value="NC_000964.3"/>
</dbReference>
<dbReference type="RefSeq" id="WP_003242576.1">
    <property type="nucleotide sequence ID" value="NZ_OZ025638.1"/>
</dbReference>
<dbReference type="FunCoup" id="Q45599">
    <property type="interactions" value="27"/>
</dbReference>
<dbReference type="STRING" id="224308.BSU40210"/>
<dbReference type="PaxDb" id="224308-BSU40210"/>
<dbReference type="EnsemblBacteria" id="CAB16058">
    <property type="protein sequence ID" value="CAB16058"/>
    <property type="gene ID" value="BSU_40210"/>
</dbReference>
<dbReference type="GeneID" id="937731"/>
<dbReference type="KEGG" id="bsu:BSU40210"/>
<dbReference type="PATRIC" id="fig|224308.179.peg.4349"/>
<dbReference type="eggNOG" id="ENOG5030EQZ">
    <property type="taxonomic scope" value="Bacteria"/>
</dbReference>
<dbReference type="InParanoid" id="Q45599"/>
<dbReference type="OrthoDB" id="2088209at2"/>
<dbReference type="BioCyc" id="BSUB:BSU40210-MONOMER"/>
<dbReference type="Proteomes" id="UP000001570">
    <property type="component" value="Chromosome"/>
</dbReference>
<dbReference type="InterPro" id="IPR046897">
    <property type="entry name" value="ABC-3C_MC6"/>
</dbReference>
<dbReference type="Pfam" id="PF20293">
    <property type="entry name" value="MC6"/>
    <property type="match status" value="1"/>
</dbReference>
<reference key="1">
    <citation type="journal article" date="1997" name="DNA Res.">
        <title>Sequence analysis of the 36-kb region between gntZ and trnY genes of Bacillus subtilis genome.</title>
        <authorList>
            <person name="Kasahara Y."/>
            <person name="Nakai S."/>
            <person name="Ogasawara N."/>
        </authorList>
    </citation>
    <scope>NUCLEOTIDE SEQUENCE [GENOMIC DNA]</scope>
    <source>
        <strain>168</strain>
    </source>
</reference>
<reference key="2">
    <citation type="journal article" date="1997" name="Nature">
        <title>The complete genome sequence of the Gram-positive bacterium Bacillus subtilis.</title>
        <authorList>
            <person name="Kunst F."/>
            <person name="Ogasawara N."/>
            <person name="Moszer I."/>
            <person name="Albertini A.M."/>
            <person name="Alloni G."/>
            <person name="Azevedo V."/>
            <person name="Bertero M.G."/>
            <person name="Bessieres P."/>
            <person name="Bolotin A."/>
            <person name="Borchert S."/>
            <person name="Borriss R."/>
            <person name="Boursier L."/>
            <person name="Brans A."/>
            <person name="Braun M."/>
            <person name="Brignell S.C."/>
            <person name="Bron S."/>
            <person name="Brouillet S."/>
            <person name="Bruschi C.V."/>
            <person name="Caldwell B."/>
            <person name="Capuano V."/>
            <person name="Carter N.M."/>
            <person name="Choi S.-K."/>
            <person name="Codani J.-J."/>
            <person name="Connerton I.F."/>
            <person name="Cummings N.J."/>
            <person name="Daniel R.A."/>
            <person name="Denizot F."/>
            <person name="Devine K.M."/>
            <person name="Duesterhoeft A."/>
            <person name="Ehrlich S.D."/>
            <person name="Emmerson P.T."/>
            <person name="Entian K.-D."/>
            <person name="Errington J."/>
            <person name="Fabret C."/>
            <person name="Ferrari E."/>
            <person name="Foulger D."/>
            <person name="Fritz C."/>
            <person name="Fujita M."/>
            <person name="Fujita Y."/>
            <person name="Fuma S."/>
            <person name="Galizzi A."/>
            <person name="Galleron N."/>
            <person name="Ghim S.-Y."/>
            <person name="Glaser P."/>
            <person name="Goffeau A."/>
            <person name="Golightly E.J."/>
            <person name="Grandi G."/>
            <person name="Guiseppi G."/>
            <person name="Guy B.J."/>
            <person name="Haga K."/>
            <person name="Haiech J."/>
            <person name="Harwood C.R."/>
            <person name="Henaut A."/>
            <person name="Hilbert H."/>
            <person name="Holsappel S."/>
            <person name="Hosono S."/>
            <person name="Hullo M.-F."/>
            <person name="Itaya M."/>
            <person name="Jones L.-M."/>
            <person name="Joris B."/>
            <person name="Karamata D."/>
            <person name="Kasahara Y."/>
            <person name="Klaerr-Blanchard M."/>
            <person name="Klein C."/>
            <person name="Kobayashi Y."/>
            <person name="Koetter P."/>
            <person name="Koningstein G."/>
            <person name="Krogh S."/>
            <person name="Kumano M."/>
            <person name="Kurita K."/>
            <person name="Lapidus A."/>
            <person name="Lardinois S."/>
            <person name="Lauber J."/>
            <person name="Lazarevic V."/>
            <person name="Lee S.-M."/>
            <person name="Levine A."/>
            <person name="Liu H."/>
            <person name="Masuda S."/>
            <person name="Mauel C."/>
            <person name="Medigue C."/>
            <person name="Medina N."/>
            <person name="Mellado R.P."/>
            <person name="Mizuno M."/>
            <person name="Moestl D."/>
            <person name="Nakai S."/>
            <person name="Noback M."/>
            <person name="Noone D."/>
            <person name="O'Reilly M."/>
            <person name="Ogawa K."/>
            <person name="Ogiwara A."/>
            <person name="Oudega B."/>
            <person name="Park S.-H."/>
            <person name="Parro V."/>
            <person name="Pohl T.M."/>
            <person name="Portetelle D."/>
            <person name="Porwollik S."/>
            <person name="Prescott A.M."/>
            <person name="Presecan E."/>
            <person name="Pujic P."/>
            <person name="Purnelle B."/>
            <person name="Rapoport G."/>
            <person name="Rey M."/>
            <person name="Reynolds S."/>
            <person name="Rieger M."/>
            <person name="Rivolta C."/>
            <person name="Rocha E."/>
            <person name="Roche B."/>
            <person name="Rose M."/>
            <person name="Sadaie Y."/>
            <person name="Sato T."/>
            <person name="Scanlan E."/>
            <person name="Schleich S."/>
            <person name="Schroeter R."/>
            <person name="Scoffone F."/>
            <person name="Sekiguchi J."/>
            <person name="Sekowska A."/>
            <person name="Seror S.J."/>
            <person name="Serror P."/>
            <person name="Shin B.-S."/>
            <person name="Soldo B."/>
            <person name="Sorokin A."/>
            <person name="Tacconi E."/>
            <person name="Takagi T."/>
            <person name="Takahashi H."/>
            <person name="Takemaru K."/>
            <person name="Takeuchi M."/>
            <person name="Tamakoshi A."/>
            <person name="Tanaka T."/>
            <person name="Terpstra P."/>
            <person name="Tognoni A."/>
            <person name="Tosato V."/>
            <person name="Uchiyama S."/>
            <person name="Vandenbol M."/>
            <person name="Vannier F."/>
            <person name="Vassarotti A."/>
            <person name="Viari A."/>
            <person name="Wambutt R."/>
            <person name="Wedler E."/>
            <person name="Wedler H."/>
            <person name="Weitzenegger T."/>
            <person name="Winters P."/>
            <person name="Wipat A."/>
            <person name="Yamamoto H."/>
            <person name="Yamane K."/>
            <person name="Yasumoto K."/>
            <person name="Yata K."/>
            <person name="Yoshida K."/>
            <person name="Yoshikawa H.-F."/>
            <person name="Zumstein E."/>
            <person name="Yoshikawa H."/>
            <person name="Danchin A."/>
        </authorList>
    </citation>
    <scope>NUCLEOTIDE SEQUENCE [LARGE SCALE GENOMIC DNA]</scope>
    <source>
        <strain>168</strain>
    </source>
</reference>
<protein>
    <recommendedName>
        <fullName>Uncharacterized protein YydC</fullName>
    </recommendedName>
</protein>
<keyword id="KW-1185">Reference proteome</keyword>
<accession>Q45599</accession>
<name>YYDC_BACSU</name>